<feature type="chain" id="PRO_0000103293" description="Branched-chain-amino-acid aminotransferase, cytosolic">
    <location>
        <begin position="1"/>
        <end position="386"/>
    </location>
</feature>
<feature type="modified residue" description="N-acetylmethionine" evidence="1">
    <location>
        <position position="1"/>
    </location>
</feature>
<feature type="modified residue" description="N6-(pyridoxal phosphate)lysine" evidence="1">
    <location>
        <position position="222"/>
    </location>
</feature>
<feature type="sequence conflict" description="In Ref. 3; AAH53706." evidence="6" ref="3">
    <original>V</original>
    <variation>A</variation>
    <location>
        <position position="238"/>
    </location>
</feature>
<feature type="sequence conflict" description="In Ref. 3; AAH53706." evidence="6" ref="3">
    <original>L</original>
    <variation>P</variation>
    <location>
        <position position="265"/>
    </location>
</feature>
<sequence length="386" mass="42791">MKDCSNGCSAPFAGERGSEEVAETFRAKDLIITPATVLKEKPDPDSLVFGATFTDHMLTVEWSSASGWEKPHIKPFGNLPIHPAASVLHYAVELFEGLKAFRGVDNKIRLFRPDLNMDRMCRSAVRTTLPMFDKEELLKCILQLLQIDQEWVPYSTSASLYIRPTFIGTEPSLGVKKPSKALLFVILSPVGPYFSSGSFTPVSLWANPKYIRAWKGGTGDCKMGGNYGASLLAQCEAVENGCQQVLWLYGKDNQITEVGTMNLFLYWINEDGEEELATPPLDGIILPGVTRQSILELAQQWGEFKVCERHLTMDDLATALEGNRVKEMFGSGTACVVCPVSDILYKGQMLHIPTMENGPKLASRILGKLTDIQYGRVESDWTIELP</sequence>
<protein>
    <recommendedName>
        <fullName>Branched-chain-amino-acid aminotransferase, cytosolic</fullName>
        <shortName>BCAT(c)</shortName>
        <ecNumber evidence="2">2.6.1.42</ecNumber>
    </recommendedName>
</protein>
<comment type="function">
    <text evidence="2">Catalyzes the first reaction in the catabolism of the essential branched chain amino acids leucine, isoleucine, and valine.</text>
</comment>
<comment type="catalytic activity">
    <reaction evidence="2">
        <text>L-leucine + 2-oxoglutarate = 4-methyl-2-oxopentanoate + L-glutamate</text>
        <dbReference type="Rhea" id="RHEA:18321"/>
        <dbReference type="ChEBI" id="CHEBI:16810"/>
        <dbReference type="ChEBI" id="CHEBI:17865"/>
        <dbReference type="ChEBI" id="CHEBI:29985"/>
        <dbReference type="ChEBI" id="CHEBI:57427"/>
        <dbReference type="EC" id="2.6.1.42"/>
    </reaction>
    <physiologicalReaction direction="left-to-right" evidence="2">
        <dbReference type="Rhea" id="RHEA:18322"/>
    </physiologicalReaction>
</comment>
<comment type="catalytic activity">
    <reaction evidence="2">
        <text>L-isoleucine + 2-oxoglutarate = (S)-3-methyl-2-oxopentanoate + L-glutamate</text>
        <dbReference type="Rhea" id="RHEA:24801"/>
        <dbReference type="ChEBI" id="CHEBI:16810"/>
        <dbReference type="ChEBI" id="CHEBI:29985"/>
        <dbReference type="ChEBI" id="CHEBI:35146"/>
        <dbReference type="ChEBI" id="CHEBI:58045"/>
        <dbReference type="EC" id="2.6.1.42"/>
    </reaction>
    <physiologicalReaction direction="left-to-right" evidence="2">
        <dbReference type="Rhea" id="RHEA:24802"/>
    </physiologicalReaction>
</comment>
<comment type="catalytic activity">
    <reaction evidence="2">
        <text>L-valine + 2-oxoglutarate = 3-methyl-2-oxobutanoate + L-glutamate</text>
        <dbReference type="Rhea" id="RHEA:24813"/>
        <dbReference type="ChEBI" id="CHEBI:11851"/>
        <dbReference type="ChEBI" id="CHEBI:16810"/>
        <dbReference type="ChEBI" id="CHEBI:29985"/>
        <dbReference type="ChEBI" id="CHEBI:57762"/>
        <dbReference type="EC" id="2.6.1.42"/>
    </reaction>
    <physiologicalReaction direction="left-to-right" evidence="2">
        <dbReference type="Rhea" id="RHEA:24814"/>
    </physiologicalReaction>
</comment>
<comment type="cofactor">
    <cofactor evidence="2">
        <name>pyridoxal 5'-phosphate</name>
        <dbReference type="ChEBI" id="CHEBI:597326"/>
    </cofactor>
</comment>
<comment type="subunit">
    <text evidence="1">Homodimer.</text>
</comment>
<comment type="subcellular location">
    <subcellularLocation>
        <location evidence="2">Cytoplasm</location>
    </subcellularLocation>
</comment>
<comment type="tissue specificity">
    <text evidence="3 4">Expressed in brain and kidney. Overexpressed in MYC-induced brain tumors, lymphomas, as well as in a teratocarcinoma cell line.</text>
</comment>
<comment type="developmental stage">
    <text evidence="4">Highly expressed at day 9 of embryogenesis. Expression decreases to moderate levels through day 13. In the developing embryo, expressed in the brain, somites and mesenophric tubules.</text>
</comment>
<comment type="similarity">
    <text evidence="6">Belongs to the class-IV pyridoxal-phosphate-dependent aminotransferase family.</text>
</comment>
<comment type="sequence caution" evidence="6">
    <conflict type="frameshift">
        <sequence resource="EMBL-CDS" id="CAA35543"/>
    </conflict>
</comment>
<accession>P24288</accession>
<accession>Q7TMT2</accession>
<dbReference type="EC" id="2.6.1.42" evidence="2"/>
<dbReference type="EMBL" id="U42443">
    <property type="protein sequence ID" value="AAB05673.1"/>
    <property type="molecule type" value="mRNA"/>
</dbReference>
<dbReference type="EMBL" id="X17502">
    <property type="protein sequence ID" value="CAA35543.1"/>
    <property type="status" value="ALT_FRAME"/>
    <property type="molecule type" value="mRNA"/>
</dbReference>
<dbReference type="EMBL" id="BC053706">
    <property type="protein sequence ID" value="AAH53706.1"/>
    <property type="molecule type" value="mRNA"/>
</dbReference>
<dbReference type="CCDS" id="CCDS39703.1"/>
<dbReference type="PIR" id="S13108">
    <property type="entry name" value="S13108"/>
</dbReference>
<dbReference type="RefSeq" id="NP_031558.3">
    <property type="nucleotide sequence ID" value="NM_007532.5"/>
</dbReference>
<dbReference type="SMR" id="P24288"/>
<dbReference type="BioGRID" id="198311">
    <property type="interactions" value="9"/>
</dbReference>
<dbReference type="FunCoup" id="P24288">
    <property type="interactions" value="2077"/>
</dbReference>
<dbReference type="STRING" id="10090.ENSMUSP00000032402"/>
<dbReference type="GlyGen" id="P24288">
    <property type="glycosylation" value="1 site, 1 O-linked glycan (1 site)"/>
</dbReference>
<dbReference type="iPTMnet" id="P24288"/>
<dbReference type="PhosphoSitePlus" id="P24288"/>
<dbReference type="SwissPalm" id="P24288"/>
<dbReference type="jPOST" id="P24288"/>
<dbReference type="PaxDb" id="10090-ENSMUSP00000032402"/>
<dbReference type="PeptideAtlas" id="P24288"/>
<dbReference type="ProteomicsDB" id="277116"/>
<dbReference type="Pumba" id="P24288"/>
<dbReference type="Antibodypedia" id="24197">
    <property type="antibodies" value="375 antibodies from 32 providers"/>
</dbReference>
<dbReference type="DNASU" id="12035"/>
<dbReference type="Ensembl" id="ENSMUST00000111742.8">
    <property type="protein sequence ID" value="ENSMUSP00000107371.2"/>
    <property type="gene ID" value="ENSMUSG00000030268.18"/>
</dbReference>
<dbReference type="GeneID" id="12035"/>
<dbReference type="KEGG" id="mmu:12035"/>
<dbReference type="UCSC" id="uc009eqt.2">
    <property type="organism name" value="mouse"/>
</dbReference>
<dbReference type="AGR" id="MGI:104861"/>
<dbReference type="CTD" id="586"/>
<dbReference type="MGI" id="MGI:104861">
    <property type="gene designation" value="Bcat1"/>
</dbReference>
<dbReference type="VEuPathDB" id="HostDB:ENSMUSG00000030268"/>
<dbReference type="eggNOG" id="KOG0975">
    <property type="taxonomic scope" value="Eukaryota"/>
</dbReference>
<dbReference type="GeneTree" id="ENSGT00390000009532"/>
<dbReference type="HOGENOM" id="CLU_031922_0_3_1"/>
<dbReference type="InParanoid" id="P24288"/>
<dbReference type="OMA" id="TDFRFIA"/>
<dbReference type="OrthoDB" id="1732691at2759"/>
<dbReference type="Reactome" id="R-MMU-70895">
    <property type="pathway name" value="Branched-chain amino acid catabolism"/>
</dbReference>
<dbReference type="BioGRID-ORCS" id="12035">
    <property type="hits" value="3 hits in 78 CRISPR screens"/>
</dbReference>
<dbReference type="ChiTaRS" id="Bcat1">
    <property type="organism name" value="mouse"/>
</dbReference>
<dbReference type="PRO" id="PR:P24288"/>
<dbReference type="Proteomes" id="UP000000589">
    <property type="component" value="Chromosome 6"/>
</dbReference>
<dbReference type="RNAct" id="P24288">
    <property type="molecule type" value="protein"/>
</dbReference>
<dbReference type="Bgee" id="ENSMUSG00000030268">
    <property type="expression patterns" value="Expressed in cumulus cell and 241 other cell types or tissues"/>
</dbReference>
<dbReference type="ExpressionAtlas" id="P24288">
    <property type="expression patterns" value="baseline and differential"/>
</dbReference>
<dbReference type="GO" id="GO:0005829">
    <property type="term" value="C:cytosol"/>
    <property type="evidence" value="ECO:0000314"/>
    <property type="project" value="MGI"/>
</dbReference>
<dbReference type="GO" id="GO:0005739">
    <property type="term" value="C:mitochondrion"/>
    <property type="evidence" value="ECO:0007005"/>
    <property type="project" value="MGI"/>
</dbReference>
<dbReference type="GO" id="GO:0004084">
    <property type="term" value="F:branched-chain-amino-acid transaminase activity"/>
    <property type="evidence" value="ECO:0000314"/>
    <property type="project" value="MGI"/>
</dbReference>
<dbReference type="GO" id="GO:0052656">
    <property type="term" value="F:L-isoleucine-2-oxoglutarate transaminase activity"/>
    <property type="evidence" value="ECO:0000250"/>
    <property type="project" value="UniProtKB"/>
</dbReference>
<dbReference type="GO" id="GO:0052654">
    <property type="term" value="F:L-leucine-2-oxoglutarate transaminase activity"/>
    <property type="evidence" value="ECO:0000250"/>
    <property type="project" value="UniProtKB"/>
</dbReference>
<dbReference type="GO" id="GO:0052655">
    <property type="term" value="F:L-valine-2-oxoglutarate transaminase activity"/>
    <property type="evidence" value="ECO:0000250"/>
    <property type="project" value="UniProtKB"/>
</dbReference>
<dbReference type="GO" id="GO:0008652">
    <property type="term" value="P:amino acid biosynthetic process"/>
    <property type="evidence" value="ECO:0007669"/>
    <property type="project" value="UniProtKB-KW"/>
</dbReference>
<dbReference type="GO" id="GO:0009082">
    <property type="term" value="P:branched-chain amino acid biosynthetic process"/>
    <property type="evidence" value="ECO:0007669"/>
    <property type="project" value="UniProtKB-KW"/>
</dbReference>
<dbReference type="GO" id="GO:0009083">
    <property type="term" value="P:branched-chain amino acid catabolic process"/>
    <property type="evidence" value="ECO:0000314"/>
    <property type="project" value="MGI"/>
</dbReference>
<dbReference type="GO" id="GO:0006629">
    <property type="term" value="P:lipid metabolic process"/>
    <property type="evidence" value="ECO:0007669"/>
    <property type="project" value="UniProtKB-KW"/>
</dbReference>
<dbReference type="CDD" id="cd01557">
    <property type="entry name" value="BCAT_beta_family"/>
    <property type="match status" value="1"/>
</dbReference>
<dbReference type="FunFam" id="3.20.10.10:FF:000005">
    <property type="entry name" value="Branched-chain-amino-acid aminotransferase"/>
    <property type="match status" value="1"/>
</dbReference>
<dbReference type="FunFam" id="3.30.470.10:FF:000002">
    <property type="entry name" value="Branched-chain-amino-acid aminotransferase"/>
    <property type="match status" value="1"/>
</dbReference>
<dbReference type="Gene3D" id="3.30.470.10">
    <property type="match status" value="1"/>
</dbReference>
<dbReference type="Gene3D" id="3.20.10.10">
    <property type="entry name" value="D-amino Acid Aminotransferase, subunit A, domain 2"/>
    <property type="match status" value="1"/>
</dbReference>
<dbReference type="InterPro" id="IPR001544">
    <property type="entry name" value="Aminotrans_IV"/>
</dbReference>
<dbReference type="InterPro" id="IPR018300">
    <property type="entry name" value="Aminotrans_IV_CS"/>
</dbReference>
<dbReference type="InterPro" id="IPR036038">
    <property type="entry name" value="Aminotransferase-like"/>
</dbReference>
<dbReference type="InterPro" id="IPR005786">
    <property type="entry name" value="B_amino_transII"/>
</dbReference>
<dbReference type="InterPro" id="IPR043132">
    <property type="entry name" value="BCAT-like_C"/>
</dbReference>
<dbReference type="InterPro" id="IPR043131">
    <property type="entry name" value="BCAT-like_N"/>
</dbReference>
<dbReference type="InterPro" id="IPR033939">
    <property type="entry name" value="BCAT_family"/>
</dbReference>
<dbReference type="NCBIfam" id="TIGR01123">
    <property type="entry name" value="ilvE_II"/>
    <property type="match status" value="1"/>
</dbReference>
<dbReference type="NCBIfam" id="NF009897">
    <property type="entry name" value="PRK13357.1"/>
    <property type="match status" value="1"/>
</dbReference>
<dbReference type="PANTHER" id="PTHR11825:SF70">
    <property type="entry name" value="BRANCHED-CHAIN-AMINO-ACID AMINOTRANSFERASE, CYTOSOLIC"/>
    <property type="match status" value="1"/>
</dbReference>
<dbReference type="PANTHER" id="PTHR11825">
    <property type="entry name" value="SUBGROUP IIII AMINOTRANSFERASE"/>
    <property type="match status" value="1"/>
</dbReference>
<dbReference type="Pfam" id="PF01063">
    <property type="entry name" value="Aminotran_4"/>
    <property type="match status" value="1"/>
</dbReference>
<dbReference type="PIRSF" id="PIRSF006468">
    <property type="entry name" value="BCAT1"/>
    <property type="match status" value="1"/>
</dbReference>
<dbReference type="SUPFAM" id="SSF56752">
    <property type="entry name" value="D-aminoacid aminotransferase-like PLP-dependent enzymes"/>
    <property type="match status" value="1"/>
</dbReference>
<dbReference type="PROSITE" id="PS00770">
    <property type="entry name" value="AA_TRANSFER_CLASS_4"/>
    <property type="match status" value="1"/>
</dbReference>
<proteinExistence type="evidence at protein level"/>
<organism>
    <name type="scientific">Mus musculus</name>
    <name type="common">Mouse</name>
    <dbReference type="NCBI Taxonomy" id="10090"/>
    <lineage>
        <taxon>Eukaryota</taxon>
        <taxon>Metazoa</taxon>
        <taxon>Chordata</taxon>
        <taxon>Craniata</taxon>
        <taxon>Vertebrata</taxon>
        <taxon>Euteleostomi</taxon>
        <taxon>Mammalia</taxon>
        <taxon>Eutheria</taxon>
        <taxon>Euarchontoglires</taxon>
        <taxon>Glires</taxon>
        <taxon>Rodentia</taxon>
        <taxon>Myomorpha</taxon>
        <taxon>Muroidea</taxon>
        <taxon>Muridae</taxon>
        <taxon>Murinae</taxon>
        <taxon>Mus</taxon>
        <taxon>Mus</taxon>
    </lineage>
</organism>
<gene>
    <name type="primary">Bcat1</name>
    <name evidence="5" type="synonym">Eca39</name>
</gene>
<keyword id="KW-0007">Acetylation</keyword>
<keyword id="KW-0028">Amino-acid biosynthesis</keyword>
<keyword id="KW-0032">Aminotransferase</keyword>
<keyword id="KW-0100">Branched-chain amino acid biosynthesis</keyword>
<keyword id="KW-0963">Cytoplasm</keyword>
<keyword id="KW-0443">Lipid metabolism</keyword>
<keyword id="KW-0663">Pyridoxal phosphate</keyword>
<keyword id="KW-1185">Reference proteome</keyword>
<keyword id="KW-0808">Transferase</keyword>
<name>BCAT1_MOUSE</name>
<reference key="1">
    <citation type="journal article" date="1996" name="Proc. Natl. Acad. Sci. U.S.A.">
        <title>ECA39, a conserved gene regulated by c-Myc in mice, is involved in G1/S cell cycle regulation in yeast.</title>
        <authorList>
            <person name="Schuldiner O."/>
            <person name="Eden A."/>
            <person name="Ben-Yosef T."/>
            <person name="Yanuka O."/>
            <person name="Simchen G."/>
            <person name="Benvenisty N."/>
        </authorList>
    </citation>
    <scope>NUCLEOTIDE SEQUENCE [MRNA]</scope>
    <scope>TISSUE SPECIFICITY</scope>
    <scope>DEVELOPMENTAL STAGE</scope>
</reference>
<reference key="2">
    <citation type="journal article" date="1990" name="Nucleic Acids Res.">
        <title>A cDNA clone overexpressed and amplified in a mouse teratocarcinoma line.</title>
        <authorList>
            <person name="Niwa O."/>
            <person name="Kumazaki T."/>
            <person name="Tsukiyama T."/>
            <person name="Soma G."/>
            <person name="Miyajima N."/>
            <person name="Yokoro K."/>
        </authorList>
    </citation>
    <scope>NUCLEOTIDE SEQUENCE [MRNA]</scope>
    <scope>TISSUE SPECIFICITY</scope>
    <source>
        <strain>129</strain>
    </source>
</reference>
<reference key="3">
    <citation type="journal article" date="2004" name="Genome Res.">
        <title>The status, quality, and expansion of the NIH full-length cDNA project: the Mammalian Gene Collection (MGC).</title>
        <authorList>
            <consortium name="The MGC Project Team"/>
        </authorList>
    </citation>
    <scope>NUCLEOTIDE SEQUENCE [LARGE SCALE MRNA]</scope>
    <source>
        <strain>C3H/He</strain>
        <tissue>Mesenchymal stem cell</tissue>
    </source>
</reference>
<reference key="4">
    <citation type="journal article" date="2010" name="Cell">
        <title>A tissue-specific atlas of mouse protein phosphorylation and expression.</title>
        <authorList>
            <person name="Huttlin E.L."/>
            <person name="Jedrychowski M.P."/>
            <person name="Elias J.E."/>
            <person name="Goswami T."/>
            <person name="Rad R."/>
            <person name="Beausoleil S.A."/>
            <person name="Villen J."/>
            <person name="Haas W."/>
            <person name="Sowa M.E."/>
            <person name="Gygi S.P."/>
        </authorList>
    </citation>
    <scope>IDENTIFICATION BY MASS SPECTROMETRY [LARGE SCALE ANALYSIS]</scope>
    <source>
        <tissue>Brain</tissue>
        <tissue>Kidney</tissue>
    </source>
</reference>
<evidence type="ECO:0000250" key="1">
    <source>
        <dbReference type="UniProtKB" id="P54687"/>
    </source>
</evidence>
<evidence type="ECO:0000250" key="2">
    <source>
        <dbReference type="UniProtKB" id="P54690"/>
    </source>
</evidence>
<evidence type="ECO:0000269" key="3">
    <source>
    </source>
</evidence>
<evidence type="ECO:0000269" key="4">
    <source>
    </source>
</evidence>
<evidence type="ECO:0000303" key="5">
    <source>
    </source>
</evidence>
<evidence type="ECO:0000305" key="6"/>